<protein>
    <recommendedName>
        <fullName evidence="1">Sulfurtransferase TusD</fullName>
        <ecNumber evidence="1">2.8.1.-</ecNumber>
    </recommendedName>
    <alternativeName>
        <fullName evidence="1">tRNA 2-thiouridine synthesizing protein D</fullName>
    </alternativeName>
</protein>
<accession>Q6CZW0</accession>
<reference key="1">
    <citation type="journal article" date="2004" name="Proc. Natl. Acad. Sci. U.S.A.">
        <title>Genome sequence of the enterobacterial phytopathogen Erwinia carotovora subsp. atroseptica and characterization of virulence factors.</title>
        <authorList>
            <person name="Bell K.S."/>
            <person name="Sebaihia M."/>
            <person name="Pritchard L."/>
            <person name="Holden M.T.G."/>
            <person name="Hyman L.J."/>
            <person name="Holeva M.C."/>
            <person name="Thomson N.R."/>
            <person name="Bentley S.D."/>
            <person name="Churcher L.J.C."/>
            <person name="Mungall K."/>
            <person name="Atkin R."/>
            <person name="Bason N."/>
            <person name="Brooks K."/>
            <person name="Chillingworth T."/>
            <person name="Clark K."/>
            <person name="Doggett J."/>
            <person name="Fraser A."/>
            <person name="Hance Z."/>
            <person name="Hauser H."/>
            <person name="Jagels K."/>
            <person name="Moule S."/>
            <person name="Norbertczak H."/>
            <person name="Ormond D."/>
            <person name="Price C."/>
            <person name="Quail M.A."/>
            <person name="Sanders M."/>
            <person name="Walker D."/>
            <person name="Whitehead S."/>
            <person name="Salmond G.P.C."/>
            <person name="Birch P.R.J."/>
            <person name="Parkhill J."/>
            <person name="Toth I.K."/>
        </authorList>
    </citation>
    <scope>NUCLEOTIDE SEQUENCE [LARGE SCALE GENOMIC DNA]</scope>
    <source>
        <strain>SCRI 1043 / ATCC BAA-672</strain>
    </source>
</reference>
<organism>
    <name type="scientific">Pectobacterium atrosepticum (strain SCRI 1043 / ATCC BAA-672)</name>
    <name type="common">Erwinia carotovora subsp. atroseptica</name>
    <dbReference type="NCBI Taxonomy" id="218491"/>
    <lineage>
        <taxon>Bacteria</taxon>
        <taxon>Pseudomonadati</taxon>
        <taxon>Pseudomonadota</taxon>
        <taxon>Gammaproteobacteria</taxon>
        <taxon>Enterobacterales</taxon>
        <taxon>Pectobacteriaceae</taxon>
        <taxon>Pectobacterium</taxon>
    </lineage>
</organism>
<sequence>MLSYCLLVTGPAYGTQQASSALQFAQALLAEGHKLESVFFYREGVLNANQLTSPANDEFDLVRGWQQLGDVHQVALNVCVAAALRRGIADSQQATQLNLVGANLQPGFILSGLGELAQSVLTYDRVIQF</sequence>
<gene>
    <name evidence="1" type="primary">tusD</name>
    <name type="ordered locus">ECA4041</name>
</gene>
<name>TUSD_PECAS</name>
<keyword id="KW-0963">Cytoplasm</keyword>
<keyword id="KW-1185">Reference proteome</keyword>
<keyword id="KW-0808">Transferase</keyword>
<keyword id="KW-0819">tRNA processing</keyword>
<dbReference type="EC" id="2.8.1.-" evidence="1"/>
<dbReference type="EMBL" id="BX950851">
    <property type="protein sequence ID" value="CAG76938.1"/>
    <property type="molecule type" value="Genomic_DNA"/>
</dbReference>
<dbReference type="RefSeq" id="WP_011095517.1">
    <property type="nucleotide sequence ID" value="NC_004547.2"/>
</dbReference>
<dbReference type="SMR" id="Q6CZW0"/>
<dbReference type="STRING" id="218491.ECA4041"/>
<dbReference type="KEGG" id="eca:ECA4041"/>
<dbReference type="PATRIC" id="fig|218491.5.peg.4107"/>
<dbReference type="eggNOG" id="COG1553">
    <property type="taxonomic scope" value="Bacteria"/>
</dbReference>
<dbReference type="HOGENOM" id="CLU_132095_0_0_6"/>
<dbReference type="OrthoDB" id="9787483at2"/>
<dbReference type="Proteomes" id="UP000007966">
    <property type="component" value="Chromosome"/>
</dbReference>
<dbReference type="GO" id="GO:1990228">
    <property type="term" value="C:sulfurtransferase complex"/>
    <property type="evidence" value="ECO:0007669"/>
    <property type="project" value="TreeGrafter"/>
</dbReference>
<dbReference type="GO" id="GO:0097163">
    <property type="term" value="F:sulfur carrier activity"/>
    <property type="evidence" value="ECO:0007669"/>
    <property type="project" value="TreeGrafter"/>
</dbReference>
<dbReference type="GO" id="GO:0016783">
    <property type="term" value="F:sulfurtransferase activity"/>
    <property type="evidence" value="ECO:0007669"/>
    <property type="project" value="UniProtKB-UniRule"/>
</dbReference>
<dbReference type="GO" id="GO:0002143">
    <property type="term" value="P:tRNA wobble position uridine thiolation"/>
    <property type="evidence" value="ECO:0007669"/>
    <property type="project" value="TreeGrafter"/>
</dbReference>
<dbReference type="FunFam" id="3.40.1260.10:FF:000001">
    <property type="entry name" value="Sulfurtransferase TusD"/>
    <property type="match status" value="1"/>
</dbReference>
<dbReference type="Gene3D" id="3.40.1260.10">
    <property type="entry name" value="DsrEFH-like"/>
    <property type="match status" value="1"/>
</dbReference>
<dbReference type="HAMAP" id="MF_00390">
    <property type="entry name" value="Thiourid_synth_D"/>
    <property type="match status" value="1"/>
</dbReference>
<dbReference type="InterPro" id="IPR027396">
    <property type="entry name" value="DsrEFH-like"/>
</dbReference>
<dbReference type="InterPro" id="IPR003787">
    <property type="entry name" value="Sulphur_relay_DsrE/F-like"/>
</dbReference>
<dbReference type="InterPro" id="IPR017463">
    <property type="entry name" value="Sulphur_relay_TusD/DsrE"/>
</dbReference>
<dbReference type="NCBIfam" id="NF001237">
    <property type="entry name" value="PRK00207.1"/>
    <property type="match status" value="1"/>
</dbReference>
<dbReference type="NCBIfam" id="TIGR03012">
    <property type="entry name" value="sulf_tusD_dsrE"/>
    <property type="match status" value="1"/>
</dbReference>
<dbReference type="PANTHER" id="PTHR34874">
    <property type="entry name" value="PROTEIN YCHN"/>
    <property type="match status" value="1"/>
</dbReference>
<dbReference type="PANTHER" id="PTHR34874:SF3">
    <property type="entry name" value="SULFURTRANSFERASE TUSD"/>
    <property type="match status" value="1"/>
</dbReference>
<dbReference type="Pfam" id="PF02635">
    <property type="entry name" value="DsrE"/>
    <property type="match status" value="1"/>
</dbReference>
<dbReference type="SUPFAM" id="SSF75169">
    <property type="entry name" value="DsrEFH-like"/>
    <property type="match status" value="1"/>
</dbReference>
<feature type="chain" id="PRO_0000234532" description="Sulfurtransferase TusD">
    <location>
        <begin position="1"/>
        <end position="129"/>
    </location>
</feature>
<feature type="active site" description="Cysteine persulfide intermediate" evidence="1">
    <location>
        <position position="79"/>
    </location>
</feature>
<comment type="function">
    <text evidence="1">Part of a sulfur-relay system required for 2-thiolation of 5-methylaminomethyl-2-thiouridine (mnm(5)s(2)U) at tRNA wobble positions. Accepts sulfur from TusA and transfers it in turn to TusE.</text>
</comment>
<comment type="subunit">
    <text evidence="1">Heterohexamer, formed by a dimer of trimers. The hexameric TusBCD complex contains 2 copies each of TusB, TusC and TusD. The TusBCD complex interacts with TusE.</text>
</comment>
<comment type="subcellular location">
    <subcellularLocation>
        <location evidence="1">Cytoplasm</location>
    </subcellularLocation>
</comment>
<comment type="similarity">
    <text evidence="1">Belongs to the DsrE/TusD family.</text>
</comment>
<evidence type="ECO:0000255" key="1">
    <source>
        <dbReference type="HAMAP-Rule" id="MF_00390"/>
    </source>
</evidence>
<proteinExistence type="inferred from homology"/>